<keyword id="KW-0002">3D-structure</keyword>
<keyword id="KW-0158">Chromosome</keyword>
<keyword id="KW-0175">Coiled coil</keyword>
<keyword id="KW-0391">Immunity</keyword>
<keyword id="KW-0399">Innate immunity</keyword>
<keyword id="KW-1017">Isopeptide bond</keyword>
<keyword id="KW-0479">Metal-binding</keyword>
<keyword id="KW-0539">Nucleus</keyword>
<keyword id="KW-0597">Phosphoprotein</keyword>
<keyword id="KW-1185">Reference proteome</keyword>
<keyword id="KW-0694">RNA-binding</keyword>
<keyword id="KW-0832">Ubl conjugation</keyword>
<keyword id="KW-0862">Zinc</keyword>
<keyword id="KW-0863">Zinc-finger</keyword>
<accession>F7BJB9</accession>
<accession>A6H605</accession>
<accession>Q4QQR6</accession>
<accession>Q6A0C2</accession>
<accession>Q8R0R0</accession>
<protein>
    <recommendedName>
        <fullName evidence="1">MORC family CW-type zinc finger protein 3</fullName>
    </recommendedName>
    <alternativeName>
        <fullName evidence="1">Nuclear matrix protein 2</fullName>
    </alternativeName>
    <alternativeName>
        <fullName evidence="1">Zinc finger CW-type coiled-coil domain protein 3</fullName>
    </alternativeName>
</protein>
<dbReference type="EMBL" id="AK172896">
    <property type="protein sequence ID" value="BAD32174.1"/>
    <property type="status" value="ALT_INIT"/>
    <property type="molecule type" value="mRNA"/>
</dbReference>
<dbReference type="EMBL" id="AC168220">
    <property type="status" value="NOT_ANNOTATED_CDS"/>
    <property type="molecule type" value="Genomic_DNA"/>
</dbReference>
<dbReference type="EMBL" id="BC098072">
    <property type="protein sequence ID" value="AAH98072.1"/>
    <property type="molecule type" value="mRNA"/>
</dbReference>
<dbReference type="EMBL" id="BC145705">
    <property type="protein sequence ID" value="AAI45706.1"/>
    <property type="molecule type" value="mRNA"/>
</dbReference>
<dbReference type="EMBL" id="BC026506">
    <property type="protein sequence ID" value="AAH26506.1"/>
    <property type="molecule type" value="mRNA"/>
</dbReference>
<dbReference type="CCDS" id="CCDS79490.1"/>
<dbReference type="RefSeq" id="NP_001038994.2">
    <property type="nucleotide sequence ID" value="NM_001045529.3"/>
</dbReference>
<dbReference type="PDB" id="5IX1">
    <property type="method" value="X-ray"/>
    <property type="resolution" value="2.60 A"/>
    <property type="chains" value="A/B=7-456"/>
</dbReference>
<dbReference type="PDB" id="5IX2">
    <property type="method" value="X-ray"/>
    <property type="resolution" value="2.90 A"/>
    <property type="chains" value="A/B=7-456"/>
</dbReference>
<dbReference type="PDBsum" id="5IX1"/>
<dbReference type="PDBsum" id="5IX2"/>
<dbReference type="SMR" id="F7BJB9"/>
<dbReference type="FunCoup" id="F7BJB9">
    <property type="interactions" value="3738"/>
</dbReference>
<dbReference type="IntAct" id="F7BJB9">
    <property type="interactions" value="3"/>
</dbReference>
<dbReference type="STRING" id="10090.ENSMUSP00000144369"/>
<dbReference type="GlyGen" id="F7BJB9">
    <property type="glycosylation" value="2 sites, 1 O-linked glycan (2 sites)"/>
</dbReference>
<dbReference type="iPTMnet" id="F7BJB9"/>
<dbReference type="PhosphoSitePlus" id="F7BJB9"/>
<dbReference type="SwissPalm" id="F7BJB9"/>
<dbReference type="jPOST" id="F7BJB9"/>
<dbReference type="PaxDb" id="10090-ENSMUSP00000040152"/>
<dbReference type="ProteomicsDB" id="252593"/>
<dbReference type="Pumba" id="F7BJB9"/>
<dbReference type="Antibodypedia" id="5016">
    <property type="antibodies" value="90 antibodies from 22 providers"/>
</dbReference>
<dbReference type="DNASU" id="338467"/>
<dbReference type="Ensembl" id="ENSMUST00000202261.5">
    <property type="protein sequence ID" value="ENSMUSP00000144369.2"/>
    <property type="gene ID" value="ENSMUSG00000039456.12"/>
</dbReference>
<dbReference type="GeneID" id="338467"/>
<dbReference type="KEGG" id="mmu:338467"/>
<dbReference type="UCSC" id="uc008aaa.2">
    <property type="organism name" value="mouse"/>
</dbReference>
<dbReference type="AGR" id="MGI:2136841"/>
<dbReference type="CTD" id="23515"/>
<dbReference type="MGI" id="MGI:2136841">
    <property type="gene designation" value="Morc3"/>
</dbReference>
<dbReference type="VEuPathDB" id="HostDB:ENSMUSG00000039456"/>
<dbReference type="eggNOG" id="KOG1845">
    <property type="taxonomic scope" value="Eukaryota"/>
</dbReference>
<dbReference type="GeneTree" id="ENSGT00940000160495"/>
<dbReference type="InParanoid" id="F7BJB9"/>
<dbReference type="OMA" id="IPYEKTH"/>
<dbReference type="OrthoDB" id="757982at2759"/>
<dbReference type="PhylomeDB" id="F7BJB9"/>
<dbReference type="TreeFam" id="TF329118"/>
<dbReference type="BioGRID-ORCS" id="338467">
    <property type="hits" value="8 hits in 70 CRISPR screens"/>
</dbReference>
<dbReference type="ChiTaRS" id="Morc3">
    <property type="organism name" value="mouse"/>
</dbReference>
<dbReference type="PRO" id="PR:F7BJB9"/>
<dbReference type="Proteomes" id="UP000000589">
    <property type="component" value="Chromosome 16"/>
</dbReference>
<dbReference type="RNAct" id="F7BJB9">
    <property type="molecule type" value="protein"/>
</dbReference>
<dbReference type="Bgee" id="ENSMUSG00000039456">
    <property type="expression patterns" value="Expressed in cleaving embryo and 265 other cell types or tissues"/>
</dbReference>
<dbReference type="ExpressionAtlas" id="F7BJB9">
    <property type="expression patterns" value="baseline and differential"/>
</dbReference>
<dbReference type="GO" id="GO:0000785">
    <property type="term" value="C:chromatin"/>
    <property type="evidence" value="ECO:0007669"/>
    <property type="project" value="Ensembl"/>
</dbReference>
<dbReference type="GO" id="GO:0016363">
    <property type="term" value="C:nuclear matrix"/>
    <property type="evidence" value="ECO:0007669"/>
    <property type="project" value="UniProtKB-SubCell"/>
</dbReference>
<dbReference type="GO" id="GO:0005654">
    <property type="term" value="C:nucleoplasm"/>
    <property type="evidence" value="ECO:0000314"/>
    <property type="project" value="MGI"/>
</dbReference>
<dbReference type="GO" id="GO:0005634">
    <property type="term" value="C:nucleus"/>
    <property type="evidence" value="ECO:0000314"/>
    <property type="project" value="MGI"/>
</dbReference>
<dbReference type="GO" id="GO:0016605">
    <property type="term" value="C:PML body"/>
    <property type="evidence" value="ECO:0000314"/>
    <property type="project" value="MGI"/>
</dbReference>
<dbReference type="GO" id="GO:0016887">
    <property type="term" value="F:ATP hydrolysis activity"/>
    <property type="evidence" value="ECO:0007669"/>
    <property type="project" value="InterPro"/>
</dbReference>
<dbReference type="GO" id="GO:0003677">
    <property type="term" value="F:DNA binding"/>
    <property type="evidence" value="ECO:0007669"/>
    <property type="project" value="Ensembl"/>
</dbReference>
<dbReference type="GO" id="GO:0140002">
    <property type="term" value="F:histone H3K4me3 reader activity"/>
    <property type="evidence" value="ECO:0000250"/>
    <property type="project" value="UniProtKB"/>
</dbReference>
<dbReference type="GO" id="GO:0035064">
    <property type="term" value="F:methylated histone binding"/>
    <property type="evidence" value="ECO:0007669"/>
    <property type="project" value="Ensembl"/>
</dbReference>
<dbReference type="GO" id="GO:0003723">
    <property type="term" value="F:RNA binding"/>
    <property type="evidence" value="ECO:0007669"/>
    <property type="project" value="UniProtKB-KW"/>
</dbReference>
<dbReference type="GO" id="GO:0008270">
    <property type="term" value="F:zinc ion binding"/>
    <property type="evidence" value="ECO:0007669"/>
    <property type="project" value="UniProtKB-KW"/>
</dbReference>
<dbReference type="GO" id="GO:0140374">
    <property type="term" value="P:antiviral innate immune response"/>
    <property type="evidence" value="ECO:0007669"/>
    <property type="project" value="Ensembl"/>
</dbReference>
<dbReference type="GO" id="GO:0051457">
    <property type="term" value="P:maintenance of protein location in nucleus"/>
    <property type="evidence" value="ECO:0000266"/>
    <property type="project" value="MGI"/>
</dbReference>
<dbReference type="GO" id="GO:0048147">
    <property type="term" value="P:negative regulation of fibroblast proliferation"/>
    <property type="evidence" value="ECO:0000266"/>
    <property type="project" value="MGI"/>
</dbReference>
<dbReference type="GO" id="GO:0032688">
    <property type="term" value="P:negative regulation of interferon-beta production"/>
    <property type="evidence" value="ECO:0007669"/>
    <property type="project" value="Ensembl"/>
</dbReference>
<dbReference type="GO" id="GO:0000122">
    <property type="term" value="P:negative regulation of transcription by RNA polymerase II"/>
    <property type="evidence" value="ECO:0007669"/>
    <property type="project" value="Ensembl"/>
</dbReference>
<dbReference type="GO" id="GO:2000774">
    <property type="term" value="P:positive regulation of cellular senescence"/>
    <property type="evidence" value="ECO:0000266"/>
    <property type="project" value="MGI"/>
</dbReference>
<dbReference type="GO" id="GO:0009791">
    <property type="term" value="P:post-embryonic development"/>
    <property type="evidence" value="ECO:0000315"/>
    <property type="project" value="MGI"/>
</dbReference>
<dbReference type="GO" id="GO:0050821">
    <property type="term" value="P:protein stabilization"/>
    <property type="evidence" value="ECO:0000266"/>
    <property type="project" value="MGI"/>
</dbReference>
<dbReference type="CDD" id="cd16931">
    <property type="entry name" value="HATPase_MORC-like"/>
    <property type="match status" value="1"/>
</dbReference>
<dbReference type="FunFam" id="3.30.40.100:FF:000003">
    <property type="entry name" value="MORC family CW-type zinc finger 3"/>
    <property type="match status" value="1"/>
</dbReference>
<dbReference type="FunFam" id="3.30.565.10:FF:000035">
    <property type="entry name" value="MORC family CW-type zinc finger protein 4"/>
    <property type="match status" value="1"/>
</dbReference>
<dbReference type="Gene3D" id="3.30.40.100">
    <property type="match status" value="1"/>
</dbReference>
<dbReference type="Gene3D" id="3.30.565.10">
    <property type="entry name" value="Histidine kinase-like ATPase, C-terminal domain"/>
    <property type="match status" value="1"/>
</dbReference>
<dbReference type="InterPro" id="IPR036890">
    <property type="entry name" value="HATPase_C_sf"/>
</dbReference>
<dbReference type="InterPro" id="IPR045261">
    <property type="entry name" value="MORC_ATPase"/>
</dbReference>
<dbReference type="InterPro" id="IPR041006">
    <property type="entry name" value="Morc_S5"/>
</dbReference>
<dbReference type="InterPro" id="IPR011124">
    <property type="entry name" value="Znf_CW"/>
</dbReference>
<dbReference type="PANTHER" id="PTHR23336:SF17">
    <property type="entry name" value="MORC FAMILY CW-TYPE ZINC FINGER PROTEIN 3"/>
    <property type="match status" value="1"/>
</dbReference>
<dbReference type="PANTHER" id="PTHR23336">
    <property type="entry name" value="ZINC FINGER CW-TYPE COILED-COIL DOMAIN PROTEIN 3"/>
    <property type="match status" value="1"/>
</dbReference>
<dbReference type="Pfam" id="PF13589">
    <property type="entry name" value="HATPase_c_3"/>
    <property type="match status" value="1"/>
</dbReference>
<dbReference type="Pfam" id="PF17942">
    <property type="entry name" value="Morc6_S5"/>
    <property type="match status" value="1"/>
</dbReference>
<dbReference type="Pfam" id="PF07496">
    <property type="entry name" value="zf-CW"/>
    <property type="match status" value="1"/>
</dbReference>
<dbReference type="SUPFAM" id="SSF55874">
    <property type="entry name" value="ATPase domain of HSP90 chaperone/DNA topoisomerase II/histidine kinase"/>
    <property type="match status" value="1"/>
</dbReference>
<dbReference type="PROSITE" id="PS51050">
    <property type="entry name" value="ZF_CW"/>
    <property type="match status" value="1"/>
</dbReference>
<reference evidence="12" key="1">
    <citation type="journal article" date="2004" name="DNA Res.">
        <title>Prediction of the coding sequences of mouse homologues of FLJ genes: the complete nucleotide sequences of 110 mouse FLJ-homologous cDNAs identified by screening of terminal sequences of cDNA clones randomly sampled from size-fractionated libraries.</title>
        <authorList>
            <person name="Okazaki N."/>
            <person name="Kikuno R."/>
            <person name="Ohara R."/>
            <person name="Inamoto S."/>
            <person name="Koseki H."/>
            <person name="Hiraoka S."/>
            <person name="Saga Y."/>
            <person name="Kitamura H."/>
            <person name="Nakagawa T."/>
            <person name="Nagase T."/>
            <person name="Ohara O."/>
            <person name="Koga H."/>
        </authorList>
    </citation>
    <scope>NUCLEOTIDE SEQUENCE [LARGE SCALE MRNA]</scope>
    <source>
        <tissue evidence="12">Natural killer cell</tissue>
    </source>
</reference>
<reference evidence="14" key="2">
    <citation type="journal article" date="2009" name="PLoS Biol.">
        <title>Lineage-specific biology revealed by a finished genome assembly of the mouse.</title>
        <authorList>
            <person name="Church D.M."/>
            <person name="Goodstadt L."/>
            <person name="Hillier L.W."/>
            <person name="Zody M.C."/>
            <person name="Goldstein S."/>
            <person name="She X."/>
            <person name="Bult C.J."/>
            <person name="Agarwala R."/>
            <person name="Cherry J.L."/>
            <person name="DiCuccio M."/>
            <person name="Hlavina W."/>
            <person name="Kapustin Y."/>
            <person name="Meric P."/>
            <person name="Maglott D."/>
            <person name="Birtle Z."/>
            <person name="Marques A.C."/>
            <person name="Graves T."/>
            <person name="Zhou S."/>
            <person name="Teague B."/>
            <person name="Potamousis K."/>
            <person name="Churas C."/>
            <person name="Place M."/>
            <person name="Herschleb J."/>
            <person name="Runnheim R."/>
            <person name="Forrest D."/>
            <person name="Amos-Landgraf J."/>
            <person name="Schwartz D.C."/>
            <person name="Cheng Z."/>
            <person name="Lindblad-Toh K."/>
            <person name="Eichler E.E."/>
            <person name="Ponting C.P."/>
        </authorList>
    </citation>
    <scope>NUCLEOTIDE SEQUENCE [LARGE SCALE GENOMIC DNA]</scope>
    <source>
        <strain evidence="14">C57BL/6J</strain>
    </source>
</reference>
<reference evidence="10 11" key="3">
    <citation type="journal article" date="2004" name="Genome Res.">
        <title>The status, quality, and expansion of the NIH full-length cDNA project: the Mammalian Gene Collection (MGC).</title>
        <authorList>
            <consortium name="The MGC Project Team"/>
        </authorList>
    </citation>
    <scope>NUCLEOTIDE SEQUENCE [LARGE SCALE MRNA]</scope>
    <source>
        <strain evidence="10">C57BL/6J</strain>
        <tissue evidence="11">Brain</tissue>
        <tissue evidence="10">Embryonic germ cell</tissue>
        <tissue evidence="9">Retina</tissue>
    </source>
</reference>
<reference evidence="8" key="4">
    <citation type="journal article" date="2007" name="Mol. Biol. Cell">
        <title>Dynamic regulation of p53 subnuclear localization and senescence by MORC3.</title>
        <authorList>
            <person name="Takahashi K."/>
            <person name="Yoshida N."/>
            <person name="Murakami N."/>
            <person name="Kawata K."/>
            <person name="Ishizaki H."/>
            <person name="Tanaka-Okamoto M."/>
            <person name="Miyoshi J."/>
            <person name="Zinn A.R."/>
            <person name="Shime H."/>
            <person name="Inoue N."/>
        </authorList>
    </citation>
    <scope>FUNCTION</scope>
    <scope>SUBCELLULAR LOCATION</scope>
    <scope>DISRUPTION PHENOTYPE</scope>
</reference>
<reference key="5">
    <citation type="journal article" date="2010" name="Cell">
        <title>A tissue-specific atlas of mouse protein phosphorylation and expression.</title>
        <authorList>
            <person name="Huttlin E.L."/>
            <person name="Jedrychowski M.P."/>
            <person name="Elias J.E."/>
            <person name="Goswami T."/>
            <person name="Rad R."/>
            <person name="Beausoleil S.A."/>
            <person name="Villen J."/>
            <person name="Haas W."/>
            <person name="Sowa M.E."/>
            <person name="Gygi S.P."/>
        </authorList>
    </citation>
    <scope>PHOSPHORYLATION [LARGE SCALE ANALYSIS] AT SER-563</scope>
    <scope>IDENTIFICATION BY MASS SPECTROMETRY [LARGE SCALE ANALYSIS]</scope>
    <source>
        <tissue>Spleen</tissue>
        <tissue>Testis</tissue>
    </source>
</reference>
<reference key="6">
    <citation type="journal article" date="2016" name="Sci. Rep.">
        <title>Morc3 mutant mice exhibit reduced cortical area and thickness, accompanied by altered haematopoietic stem cells niche and bone cell differentiation.</title>
        <authorList>
            <person name="Jadhav G."/>
            <person name="Teguh D."/>
            <person name="Kenny J."/>
            <person name="Tickner J."/>
            <person name="Xu J."/>
        </authorList>
    </citation>
    <scope>DISRUPTION PHENOTYPE</scope>
</reference>
<reference evidence="15 16" key="7">
    <citation type="journal article" date="2016" name="Proc. Natl. Acad. Sci. U.S.A.">
        <title>Mouse MORC3 is a GHKL ATPase that localizes to H3K4me3 marked chromatin.</title>
        <authorList>
            <person name="Li S."/>
            <person name="Yen L."/>
            <person name="Pastor W.A."/>
            <person name="Johnston J.B."/>
            <person name="Du J."/>
            <person name="Shew C.J."/>
            <person name="Liu W."/>
            <person name="Ho J."/>
            <person name="Stender B."/>
            <person name="Clark A.T."/>
            <person name="Burlingame A.L."/>
            <person name="Daxinger L."/>
            <person name="Patel D.J."/>
            <person name="Jacobsen S.E."/>
        </authorList>
    </citation>
    <scope>X-RAY CRYSTALLOGRAPHY (2.60 ANGSTROMS) OF 7-456 IN COMPLEX WITH ZINC</scope>
    <scope>SUBUNIT</scope>
    <scope>SUBCELLULAR LOCATION</scope>
</reference>
<comment type="function">
    <text evidence="1 5">Nuclear matrix protein which forms MORC3-NBs (nuclear bodies) via an ATP-dependent mechanism and plays a role in innate immunity by restricting different viruses through modulation of the IFN response. Mechanistically, possesses a primary antiviral function through a MORC3-regulated element that activates IFNB1, and this function is guarded by a secondary IFN-repressing function. Sumoylated MORC3-NBs associates with PML-NBs and recruits TP53 and SP100, thus regulating TP53 activity (PubMed:17332504). Binds RNA in vitro. Histone methylation reader which binds to non-methylated (H3K4me0), monomethylated (H3K4me1), dimethylated (H3K4me2) and trimethylated (H3K4me3) 'Lys-4' on histone H3. The order of binding preference is H3K4me3 &gt; H3K4me2 &gt; H3K4me1 &gt; H3K4me0.</text>
</comment>
<comment type="activity regulation">
    <text evidence="1">Dimerization of the ATPase domain is strictly required for the catalytic activity and binding to double-stranded DNA. Disrupting the interface between ATPase and the CW domains releases autoinhibition since the CW domain sterically impedes binding of the ATPase domain to DNA.</text>
</comment>
<comment type="subunit">
    <text evidence="5">Homodimer. The sumoylated form interacts with PML (via SUMO-interacting motif). Interacts with TP53.</text>
</comment>
<comment type="subcellular location">
    <subcellularLocation>
        <location evidence="5">Nucleus</location>
        <location evidence="5">Nucleoplasm</location>
    </subcellularLocation>
    <subcellularLocation>
        <location evidence="1">Nucleus matrix</location>
    </subcellularLocation>
    <subcellularLocation>
        <location evidence="5">Nucleus</location>
        <location evidence="5">PML body</location>
    </subcellularLocation>
    <subcellularLocation>
        <location evidence="7">Chromosome</location>
    </subcellularLocation>
    <text evidence="1">Also found in PML-independent nuclear bodies. Localization to nuclear bodies is ATP-dependent.</text>
</comment>
<comment type="domain">
    <text evidence="1">The CW-TYPE zinc finger mediates its binding to trimethylated histone H3K4me3.</text>
</comment>
<comment type="PTM">
    <text evidence="1">Sumoylation is involved in interaction with PML and localization to PML nuclear bodies.</text>
</comment>
<comment type="disruption phenotype">
    <text evidence="5 6">Lethality occurs at birth or within a day thereafter, for unknown reasons. Embryos at 14.5 dpc are morphologically indistinguishable from wild type (PubMed:17332504). MORC3 deletion leads to increased osteoblast differentiation and altered osteoblastic gene expression through up-regulation of IFN-beta/STAT1 signaling pathway (PubMed:27188231).</text>
</comment>
<comment type="sequence caution" evidence="8">
    <conflict type="erroneous initiation">
        <sequence resource="EMBL-CDS" id="BAD32174"/>
    </conflict>
    <text>Extended N-terminus.</text>
</comment>
<sequence length="942" mass="106522">MAAQPPTGIRLSALCPKFLHTNSTSHTWPFSAVAELIDNAYDPDVNAKQIWIDKTVISDHICLTFTDNGNGMTADKLHKMLSFGFSDKVTMNGHVPVGLYGNGFKSGSMRLGKDAMVFTKNGETMSVGFLSQTYLEVIKAEHVVVPIVTFNKHRQMINLTESKASLAAILEHSLFSTEQKLLAELNAIMGKKGTRIIIWNLRSYKNATEFDFEKDKYDIRIPEDLDETAGRKGYKKQERMDQIAPESDYSLRAYCSILYLKPRMQIIIRGQKVKTQLVSKSLAYIERDVYRPKFLTRTVRITFGFNCRNKDHYGIMMYHKNRLIKAYEKVGCQLKANNMGVGVVGIIECNFLKPTHNKQDFDYTNEYRLTILALGEKLNDYWNEMKVKKNAEYPVNLPVEDIQKRPDQTWVQCDACLKWRKLPDGIDQLPEKWYCSNNPDPQFRNCEVPEEPEDEDLVHPTYEKTYKKTSKERFRIRQPEILPRILPQINPELLYQTSVSSQSFSPVKESVPRPHLSEVTSPFAARIINLNLASPASEPENSSMKRKLGVHSSILNAKTRRLSNPPVENSSYKNDDDEDVIILEENSTPKPAVDLEVKSDIEVKSEQSHTEQSGIHVDLVSSPKPCVQASSTSTSTSRSDPGITVSTQTDAPGLTVKKEESMEEDMGVRNGTATLSCVGTEAKVQETSAESVDATSHQLQELRSELLVVTQERDDYKRQCQMFTDQIQVLQQRLLEMNDKCVKKEKCHQSTETDAVFLLDSVNGQAESLDHLGSQYQQALQEIERLKRQCSALQQVKSECSQASCTESKSEVDEMAVQLDDVFRQLDKCTIERDQYKNEVQLLEIEKSHIHSQCEELQTEVEQLKSTGQQAAADGSTASNAEEPVSYVDGESLKLRSLRVNVGQLLAMIVPDLDLQQVNYDVDVVDEILGQVVEQMSEISST</sequence>
<organism evidence="14">
    <name type="scientific">Mus musculus</name>
    <name type="common">Mouse</name>
    <dbReference type="NCBI Taxonomy" id="10090"/>
    <lineage>
        <taxon>Eukaryota</taxon>
        <taxon>Metazoa</taxon>
        <taxon>Chordata</taxon>
        <taxon>Craniata</taxon>
        <taxon>Vertebrata</taxon>
        <taxon>Euteleostomi</taxon>
        <taxon>Mammalia</taxon>
        <taxon>Eutheria</taxon>
        <taxon>Euarchontoglires</taxon>
        <taxon>Glires</taxon>
        <taxon>Rodentia</taxon>
        <taxon>Myomorpha</taxon>
        <taxon>Muroidea</taxon>
        <taxon>Muridae</taxon>
        <taxon>Murinae</taxon>
        <taxon>Mus</taxon>
        <taxon>Mus</taxon>
    </lineage>
</organism>
<gene>
    <name evidence="13" type="primary">Morc3</name>
    <name evidence="13" type="synonym">Nxp2</name>
    <name evidence="13" type="synonym">Zcwcc3</name>
</gene>
<feature type="chain" id="PRO_0000435141" description="MORC family CW-type zinc finger protein 3">
    <location>
        <begin position="1"/>
        <end position="942"/>
    </location>
</feature>
<feature type="zinc finger region" description="CW-type" evidence="3">
    <location>
        <begin position="404"/>
        <end position="454"/>
    </location>
</feature>
<feature type="region of interest" description="Nuclear matrix binding" evidence="1">
    <location>
        <begin position="326"/>
        <end position="353"/>
    </location>
</feature>
<feature type="region of interest" description="RNA binding" evidence="1">
    <location>
        <begin position="503"/>
        <end position="594"/>
    </location>
</feature>
<feature type="region of interest" description="Disordered" evidence="4">
    <location>
        <begin position="623"/>
        <end position="654"/>
    </location>
</feature>
<feature type="coiled-coil region" evidence="2">
    <location>
        <begin position="696"/>
        <end position="874"/>
    </location>
</feature>
<feature type="compositionally biased region" description="Low complexity" evidence="4">
    <location>
        <begin position="630"/>
        <end position="639"/>
    </location>
</feature>
<feature type="binding site" evidence="3 7">
    <location>
        <position position="413"/>
    </location>
    <ligand>
        <name>Zn(2+)</name>
        <dbReference type="ChEBI" id="CHEBI:29105"/>
    </ligand>
</feature>
<feature type="binding site" evidence="3 7">
    <location>
        <position position="416"/>
    </location>
    <ligand>
        <name>Zn(2+)</name>
        <dbReference type="ChEBI" id="CHEBI:29105"/>
    </ligand>
</feature>
<feature type="binding site" evidence="3 7">
    <location>
        <position position="435"/>
    </location>
    <ligand>
        <name>Zn(2+)</name>
        <dbReference type="ChEBI" id="CHEBI:29105"/>
    </ligand>
</feature>
<feature type="binding site" evidence="3 7">
    <location>
        <position position="446"/>
    </location>
    <ligand>
        <name>Zn(2+)</name>
        <dbReference type="ChEBI" id="CHEBI:29105"/>
    </ligand>
</feature>
<feature type="modified residue" description="Phosphoserine" evidence="1">
    <location>
        <position position="517"/>
    </location>
</feature>
<feature type="modified residue" description="Phosphoserine" evidence="1">
    <location>
        <position position="543"/>
    </location>
</feature>
<feature type="modified residue" description="Phosphoserine" evidence="17">
    <location>
        <position position="563"/>
    </location>
</feature>
<feature type="modified residue" description="Phosphoserine" evidence="1">
    <location>
        <position position="768"/>
    </location>
</feature>
<feature type="cross-link" description="Glycyl lysine isopeptide (Lys-Gly) (interchain with G-Cter in SUMO2)" evidence="1">
    <location>
        <position position="191"/>
    </location>
</feature>
<feature type="cross-link" description="Glycyl lysine isopeptide (Lys-Gly) (interchain with G-Cter in SUMO2)" evidence="1">
    <location>
        <position position="205"/>
    </location>
</feature>
<feature type="cross-link" description="Glycyl lysine isopeptide (Lys-Gly) (interchain with G-Cter in SUMO2)" evidence="1">
    <location>
        <position position="280"/>
    </location>
</feature>
<feature type="cross-link" description="Glycyl lysine isopeptide (Lys-Gly) (interchain with G-Cter in SUMO2)" evidence="1">
    <location>
        <position position="293"/>
    </location>
</feature>
<feature type="cross-link" description="Glycyl lysine isopeptide (Lys-Gly) (interchain with G-Cter in SUMO2)" evidence="1">
    <location>
        <position position="558"/>
    </location>
</feature>
<feature type="cross-link" description="Glycyl lysine isopeptide (Lys-Gly) (interchain with G-Cter in SUMO1); alternate" evidence="1">
    <location>
        <position position="604"/>
    </location>
</feature>
<feature type="cross-link" description="Glycyl lysine isopeptide (Lys-Gly) (interchain with G-Cter in SUMO2); alternate" evidence="1">
    <location>
        <position position="604"/>
    </location>
</feature>
<feature type="cross-link" description="Glycyl lysine isopeptide (Lys-Gly) (interchain with G-Cter in SUMO1); alternate" evidence="1">
    <location>
        <position position="657"/>
    </location>
</feature>
<feature type="cross-link" description="Glycyl lysine isopeptide (Lys-Gly) (interchain with G-Cter in SUMO2); alternate" evidence="1">
    <location>
        <position position="657"/>
    </location>
</feature>
<feature type="cross-link" description="Glycyl lysine isopeptide (Lys-Gly) (interchain with G-Cter in SUMO1); alternate" evidence="1">
    <location>
        <position position="658"/>
    </location>
</feature>
<feature type="cross-link" description="Glycyl lysine isopeptide (Lys-Gly) (interchain with G-Cter in SUMO2); alternate" evidence="1">
    <location>
        <position position="658"/>
    </location>
</feature>
<feature type="cross-link" description="Glycyl lysine isopeptide (Lys-Gly) (interchain with G-Cter in SUMO1); alternate" evidence="1">
    <location>
        <position position="743"/>
    </location>
</feature>
<feature type="cross-link" description="Glycyl lysine isopeptide (Lys-Gly) (interchain with G-Cter in SUMO2); alternate" evidence="1">
    <location>
        <position position="743"/>
    </location>
</feature>
<feature type="cross-link" description="Glycyl lysine isopeptide (Lys-Gly) (interchain with G-Cter in SUMO1); alternate" evidence="1">
    <location>
        <position position="797"/>
    </location>
</feature>
<feature type="cross-link" description="Glycyl lysine isopeptide (Lys-Gly) (interchain with G-Cter in SUMO2); alternate" evidence="1">
    <location>
        <position position="797"/>
    </location>
</feature>
<feature type="sequence conflict" description="In Ref. 3; AAH98072." evidence="8" ref="3">
    <original>Y</original>
    <variation>H</variation>
    <location>
        <position position="134"/>
    </location>
</feature>
<feature type="sequence conflict" description="In Ref. 3; AAI45706." evidence="8" ref="3">
    <original>G</original>
    <variation>S</variation>
    <location>
        <position position="679"/>
    </location>
</feature>
<feature type="helix" evidence="18">
    <location>
        <begin position="18"/>
        <end position="21"/>
    </location>
</feature>
<feature type="turn" evidence="18">
    <location>
        <begin position="22"/>
        <end position="25"/>
    </location>
</feature>
<feature type="helix" evidence="18">
    <location>
        <begin position="29"/>
        <end position="41"/>
    </location>
</feature>
<feature type="turn" evidence="18">
    <location>
        <begin position="43"/>
        <end position="45"/>
    </location>
</feature>
<feature type="strand" evidence="18">
    <location>
        <begin position="48"/>
        <end position="57"/>
    </location>
</feature>
<feature type="strand" evidence="18">
    <location>
        <begin position="60"/>
        <end position="67"/>
    </location>
</feature>
<feature type="helix" evidence="18">
    <location>
        <begin position="74"/>
        <end position="80"/>
    </location>
</feature>
<feature type="strand" evidence="18">
    <location>
        <begin position="82"/>
        <end position="84"/>
    </location>
</feature>
<feature type="helix" evidence="18">
    <location>
        <begin position="103"/>
        <end position="111"/>
    </location>
</feature>
<feature type="strand" evidence="18">
    <location>
        <begin position="112"/>
        <end position="131"/>
    </location>
</feature>
<feature type="helix" evidence="18">
    <location>
        <begin position="132"/>
        <end position="137"/>
    </location>
</feature>
<feature type="strand" evidence="18">
    <location>
        <begin position="147"/>
        <end position="151"/>
    </location>
</feature>
<feature type="strand" evidence="18">
    <location>
        <begin position="156"/>
        <end position="158"/>
    </location>
</feature>
<feature type="helix" evidence="18">
    <location>
        <begin position="159"/>
        <end position="172"/>
    </location>
</feature>
<feature type="helix" evidence="18">
    <location>
        <begin position="178"/>
        <end position="186"/>
    </location>
</feature>
<feature type="strand" evidence="18">
    <location>
        <begin position="190"/>
        <end position="201"/>
    </location>
</feature>
<feature type="strand" evidence="18">
    <location>
        <begin position="203"/>
        <end position="211"/>
    </location>
</feature>
<feature type="helix" evidence="18">
    <location>
        <begin position="246"/>
        <end position="249"/>
    </location>
</feature>
<feature type="helix" evidence="18">
    <location>
        <begin position="251"/>
        <end position="257"/>
    </location>
</feature>
<feature type="strand" evidence="18">
    <location>
        <begin position="258"/>
        <end position="261"/>
    </location>
</feature>
<feature type="strand" evidence="18">
    <location>
        <begin position="264"/>
        <end position="268"/>
    </location>
</feature>
<feature type="turn" evidence="19">
    <location>
        <begin position="279"/>
        <end position="281"/>
    </location>
</feature>
<feature type="strand" evidence="18">
    <location>
        <begin position="282"/>
        <end position="290"/>
    </location>
</feature>
<feature type="strand" evidence="18">
    <location>
        <begin position="299"/>
        <end position="308"/>
    </location>
</feature>
<feature type="strand" evidence="18">
    <location>
        <begin position="314"/>
        <end position="319"/>
    </location>
</feature>
<feature type="strand" evidence="18">
    <location>
        <begin position="322"/>
        <end position="328"/>
    </location>
</feature>
<feature type="strand" evidence="18">
    <location>
        <begin position="342"/>
        <end position="348"/>
    </location>
</feature>
<feature type="strand" evidence="18">
    <location>
        <begin position="358"/>
        <end position="361"/>
    </location>
</feature>
<feature type="helix" evidence="18">
    <location>
        <begin position="365"/>
        <end position="385"/>
    </location>
</feature>
<feature type="strand" evidence="18">
    <location>
        <begin position="408"/>
        <end position="412"/>
    </location>
</feature>
<feature type="turn" evidence="18">
    <location>
        <begin position="414"/>
        <end position="416"/>
    </location>
</feature>
<feature type="strand" evidence="18">
    <location>
        <begin position="419"/>
        <end position="422"/>
    </location>
</feature>
<feature type="strand" evidence="19">
    <location>
        <begin position="431"/>
        <end position="433"/>
    </location>
</feature>
<feature type="helix" evidence="18">
    <location>
        <begin position="435"/>
        <end position="437"/>
    </location>
</feature>
<feature type="helix" evidence="18">
    <location>
        <begin position="441"/>
        <end position="443"/>
    </location>
</feature>
<evidence type="ECO:0000250" key="1">
    <source>
        <dbReference type="UniProtKB" id="Q14149"/>
    </source>
</evidence>
<evidence type="ECO:0000255" key="2"/>
<evidence type="ECO:0000255" key="3">
    <source>
        <dbReference type="PROSITE-ProRule" id="PRU00454"/>
    </source>
</evidence>
<evidence type="ECO:0000256" key="4">
    <source>
        <dbReference type="SAM" id="MobiDB-lite"/>
    </source>
</evidence>
<evidence type="ECO:0000269" key="5">
    <source>
    </source>
</evidence>
<evidence type="ECO:0000269" key="6">
    <source>
    </source>
</evidence>
<evidence type="ECO:0000269" key="7">
    <source>
    </source>
</evidence>
<evidence type="ECO:0000305" key="8"/>
<evidence type="ECO:0000312" key="9">
    <source>
        <dbReference type="EMBL" id="AAH26506.1"/>
    </source>
</evidence>
<evidence type="ECO:0000312" key="10">
    <source>
        <dbReference type="EMBL" id="AAH98072.1"/>
    </source>
</evidence>
<evidence type="ECO:0000312" key="11">
    <source>
        <dbReference type="EMBL" id="AAI45706.1"/>
    </source>
</evidence>
<evidence type="ECO:0000312" key="12">
    <source>
        <dbReference type="EMBL" id="BAD32174.1"/>
    </source>
</evidence>
<evidence type="ECO:0000312" key="13">
    <source>
        <dbReference type="MGI" id="MGI:2136841"/>
    </source>
</evidence>
<evidence type="ECO:0000312" key="14">
    <source>
        <dbReference type="Proteomes" id="UP000000589"/>
    </source>
</evidence>
<evidence type="ECO:0007744" key="15">
    <source>
        <dbReference type="PDB" id="5IX1"/>
    </source>
</evidence>
<evidence type="ECO:0007744" key="16">
    <source>
        <dbReference type="PDB" id="5IX2"/>
    </source>
</evidence>
<evidence type="ECO:0007744" key="17">
    <source>
    </source>
</evidence>
<evidence type="ECO:0007829" key="18">
    <source>
        <dbReference type="PDB" id="5IX1"/>
    </source>
</evidence>
<evidence type="ECO:0007829" key="19">
    <source>
        <dbReference type="PDB" id="5IX2"/>
    </source>
</evidence>
<name>MORC3_MOUSE</name>
<proteinExistence type="evidence at protein level"/>